<evidence type="ECO:0000255" key="1">
    <source>
        <dbReference type="HAMAP-Rule" id="MF_01719"/>
    </source>
</evidence>
<organism>
    <name type="scientific">Staphylococcus epidermidis (strain ATCC 35984 / DSM 28319 / BCRC 17069 / CCUG 31568 / BM 3577 / RP62A)</name>
    <dbReference type="NCBI Taxonomy" id="176279"/>
    <lineage>
        <taxon>Bacteria</taxon>
        <taxon>Bacillati</taxon>
        <taxon>Bacillota</taxon>
        <taxon>Bacilli</taxon>
        <taxon>Bacillales</taxon>
        <taxon>Staphylococcaceae</taxon>
        <taxon>Staphylococcus</taxon>
    </lineage>
</organism>
<comment type="function">
    <text evidence="1">Part of the ABC transporter complex MetNIQ involved in methionine import. Responsible for energy coupling to the transport system.</text>
</comment>
<comment type="catalytic activity">
    <reaction evidence="1">
        <text>L-methionine(out) + ATP + H2O = L-methionine(in) + ADP + phosphate + H(+)</text>
        <dbReference type="Rhea" id="RHEA:29779"/>
        <dbReference type="ChEBI" id="CHEBI:15377"/>
        <dbReference type="ChEBI" id="CHEBI:15378"/>
        <dbReference type="ChEBI" id="CHEBI:30616"/>
        <dbReference type="ChEBI" id="CHEBI:43474"/>
        <dbReference type="ChEBI" id="CHEBI:57844"/>
        <dbReference type="ChEBI" id="CHEBI:456216"/>
        <dbReference type="EC" id="7.4.2.11"/>
    </reaction>
</comment>
<comment type="catalytic activity">
    <reaction evidence="1">
        <text>D-methionine(out) + ATP + H2O = D-methionine(in) + ADP + phosphate + H(+)</text>
        <dbReference type="Rhea" id="RHEA:29767"/>
        <dbReference type="ChEBI" id="CHEBI:15377"/>
        <dbReference type="ChEBI" id="CHEBI:15378"/>
        <dbReference type="ChEBI" id="CHEBI:30616"/>
        <dbReference type="ChEBI" id="CHEBI:43474"/>
        <dbReference type="ChEBI" id="CHEBI:57932"/>
        <dbReference type="ChEBI" id="CHEBI:456216"/>
        <dbReference type="EC" id="7.4.2.11"/>
    </reaction>
</comment>
<comment type="subunit">
    <text evidence="1">The complex is composed of two ATP-binding proteins (MetN), two transmembrane proteins (MetI) and a solute-binding protein (MetQ).</text>
</comment>
<comment type="subcellular location">
    <subcellularLocation>
        <location evidence="1">Cell membrane</location>
        <topology evidence="1">Peripheral membrane protein</topology>
    </subcellularLocation>
</comment>
<comment type="similarity">
    <text evidence="1">Belongs to the ABC transporter superfamily. Methionine importer (TC 3.A.1.24) family.</text>
</comment>
<keyword id="KW-0029">Amino-acid transport</keyword>
<keyword id="KW-0067">ATP-binding</keyword>
<keyword id="KW-1003">Cell membrane</keyword>
<keyword id="KW-0472">Membrane</keyword>
<keyword id="KW-0547">Nucleotide-binding</keyword>
<keyword id="KW-1185">Reference proteome</keyword>
<keyword id="KW-1278">Translocase</keyword>
<keyword id="KW-0813">Transport</keyword>
<proteinExistence type="inferred from homology"/>
<name>METN1_STAEQ</name>
<sequence length="341" mass="39049">MIEFKNVNKVFRKKRETIQALKNVSFKIDQHDIFGVIGYSGAGKSTLVRLVNQLETVSDGQVIVDGHEIDTYKEKDLRDIKKDIGMIFQHFNLLNSKSVYKNVAMPLILSKTNKKEIKEKVDEMLEFVGLADKKDQFPDELSGGQKQRVAIARALVTHPKILLCDEATSALDPATTSSILNLLSNVNRTFGVTIMMITHEMSVIQKICHRVAVMENGEVIEMGTVKDVFSHPQTNTAKNFVSTVINTEPSKELRASFNSRKDSNFTDYKLFLDSEQIQLPILNELINEHHLNVNVLFSSMSEIQDETVCYLWLRFEHDESFNDFKLTDYLSKRHIRYEEVI</sequence>
<accession>Q5HRU5</accession>
<feature type="chain" id="PRO_0000270407" description="Methionine import ATP-binding protein MetN 1">
    <location>
        <begin position="1"/>
        <end position="341"/>
    </location>
</feature>
<feature type="domain" description="ABC transporter" evidence="1">
    <location>
        <begin position="2"/>
        <end position="241"/>
    </location>
</feature>
<feature type="binding site" evidence="1">
    <location>
        <begin position="38"/>
        <end position="45"/>
    </location>
    <ligand>
        <name>ATP</name>
        <dbReference type="ChEBI" id="CHEBI:30616"/>
    </ligand>
</feature>
<protein>
    <recommendedName>
        <fullName evidence="1">Methionine import ATP-binding protein MetN 1</fullName>
        <ecNumber evidence="1">7.4.2.11</ecNumber>
    </recommendedName>
</protein>
<gene>
    <name evidence="1" type="primary">metN1</name>
    <name type="ordered locus">SERP0097</name>
</gene>
<dbReference type="EC" id="7.4.2.11" evidence="1"/>
<dbReference type="EMBL" id="CP000029">
    <property type="protein sequence ID" value="AAW53525.1"/>
    <property type="molecule type" value="Genomic_DNA"/>
</dbReference>
<dbReference type="RefSeq" id="WP_001832450.1">
    <property type="nucleotide sequence ID" value="NC_002976.3"/>
</dbReference>
<dbReference type="SMR" id="Q5HRU5"/>
<dbReference type="STRING" id="176279.SERP0097"/>
<dbReference type="KEGG" id="ser:SERP0097"/>
<dbReference type="eggNOG" id="COG1135">
    <property type="taxonomic scope" value="Bacteria"/>
</dbReference>
<dbReference type="HOGENOM" id="CLU_000604_1_3_9"/>
<dbReference type="Proteomes" id="UP000000531">
    <property type="component" value="Chromosome"/>
</dbReference>
<dbReference type="GO" id="GO:0005886">
    <property type="term" value="C:plasma membrane"/>
    <property type="evidence" value="ECO:0007669"/>
    <property type="project" value="UniProtKB-SubCell"/>
</dbReference>
<dbReference type="GO" id="GO:0033232">
    <property type="term" value="F:ABC-type D-methionine transporter activity"/>
    <property type="evidence" value="ECO:0007669"/>
    <property type="project" value="UniProtKB-EC"/>
</dbReference>
<dbReference type="GO" id="GO:0005524">
    <property type="term" value="F:ATP binding"/>
    <property type="evidence" value="ECO:0007669"/>
    <property type="project" value="UniProtKB-KW"/>
</dbReference>
<dbReference type="GO" id="GO:0016887">
    <property type="term" value="F:ATP hydrolysis activity"/>
    <property type="evidence" value="ECO:0007669"/>
    <property type="project" value="InterPro"/>
</dbReference>
<dbReference type="CDD" id="cd03258">
    <property type="entry name" value="ABC_MetN_methionine_transporter"/>
    <property type="match status" value="1"/>
</dbReference>
<dbReference type="FunFam" id="3.40.50.300:FF:000056">
    <property type="entry name" value="Cell division ATP-binding protein FtsE"/>
    <property type="match status" value="1"/>
</dbReference>
<dbReference type="Gene3D" id="3.30.70.260">
    <property type="match status" value="1"/>
</dbReference>
<dbReference type="Gene3D" id="3.40.50.300">
    <property type="entry name" value="P-loop containing nucleotide triphosphate hydrolases"/>
    <property type="match status" value="1"/>
</dbReference>
<dbReference type="InterPro" id="IPR003593">
    <property type="entry name" value="AAA+_ATPase"/>
</dbReference>
<dbReference type="InterPro" id="IPR003439">
    <property type="entry name" value="ABC_transporter-like_ATP-bd"/>
</dbReference>
<dbReference type="InterPro" id="IPR017871">
    <property type="entry name" value="ABC_transporter-like_CS"/>
</dbReference>
<dbReference type="InterPro" id="IPR045865">
    <property type="entry name" value="ACT-like_dom_sf"/>
</dbReference>
<dbReference type="InterPro" id="IPR041701">
    <property type="entry name" value="MetN_ABC"/>
</dbReference>
<dbReference type="InterPro" id="IPR050086">
    <property type="entry name" value="MetN_ABC_transporter-like"/>
</dbReference>
<dbReference type="InterPro" id="IPR018449">
    <property type="entry name" value="NIL_domain"/>
</dbReference>
<dbReference type="InterPro" id="IPR027417">
    <property type="entry name" value="P-loop_NTPase"/>
</dbReference>
<dbReference type="PANTHER" id="PTHR43166">
    <property type="entry name" value="AMINO ACID IMPORT ATP-BINDING PROTEIN"/>
    <property type="match status" value="1"/>
</dbReference>
<dbReference type="PANTHER" id="PTHR43166:SF30">
    <property type="entry name" value="METHIONINE IMPORT ATP-BINDING PROTEIN METN"/>
    <property type="match status" value="1"/>
</dbReference>
<dbReference type="Pfam" id="PF00005">
    <property type="entry name" value="ABC_tran"/>
    <property type="match status" value="1"/>
</dbReference>
<dbReference type="Pfam" id="PF09383">
    <property type="entry name" value="NIL"/>
    <property type="match status" value="1"/>
</dbReference>
<dbReference type="SMART" id="SM00382">
    <property type="entry name" value="AAA"/>
    <property type="match status" value="1"/>
</dbReference>
<dbReference type="SMART" id="SM00930">
    <property type="entry name" value="NIL"/>
    <property type="match status" value="1"/>
</dbReference>
<dbReference type="SUPFAM" id="SSF55021">
    <property type="entry name" value="ACT-like"/>
    <property type="match status" value="1"/>
</dbReference>
<dbReference type="SUPFAM" id="SSF52540">
    <property type="entry name" value="P-loop containing nucleoside triphosphate hydrolases"/>
    <property type="match status" value="1"/>
</dbReference>
<dbReference type="PROSITE" id="PS00211">
    <property type="entry name" value="ABC_TRANSPORTER_1"/>
    <property type="match status" value="1"/>
</dbReference>
<dbReference type="PROSITE" id="PS50893">
    <property type="entry name" value="ABC_TRANSPORTER_2"/>
    <property type="match status" value="1"/>
</dbReference>
<dbReference type="PROSITE" id="PS51264">
    <property type="entry name" value="METN"/>
    <property type="match status" value="1"/>
</dbReference>
<reference key="1">
    <citation type="journal article" date="2005" name="J. Bacteriol.">
        <title>Insights on evolution of virulence and resistance from the complete genome analysis of an early methicillin-resistant Staphylococcus aureus strain and a biofilm-producing methicillin-resistant Staphylococcus epidermidis strain.</title>
        <authorList>
            <person name="Gill S.R."/>
            <person name="Fouts D.E."/>
            <person name="Archer G.L."/>
            <person name="Mongodin E.F."/>
            <person name="DeBoy R.T."/>
            <person name="Ravel J."/>
            <person name="Paulsen I.T."/>
            <person name="Kolonay J.F."/>
            <person name="Brinkac L.M."/>
            <person name="Beanan M.J."/>
            <person name="Dodson R.J."/>
            <person name="Daugherty S.C."/>
            <person name="Madupu R."/>
            <person name="Angiuoli S.V."/>
            <person name="Durkin A.S."/>
            <person name="Haft D.H."/>
            <person name="Vamathevan J.J."/>
            <person name="Khouri H."/>
            <person name="Utterback T.R."/>
            <person name="Lee C."/>
            <person name="Dimitrov G."/>
            <person name="Jiang L."/>
            <person name="Qin H."/>
            <person name="Weidman J."/>
            <person name="Tran K."/>
            <person name="Kang K.H."/>
            <person name="Hance I.R."/>
            <person name="Nelson K.E."/>
            <person name="Fraser C.M."/>
        </authorList>
    </citation>
    <scope>NUCLEOTIDE SEQUENCE [LARGE SCALE GENOMIC DNA]</scope>
    <source>
        <strain>ATCC 35984 / DSM 28319 / BCRC 17069 / CCUG 31568 / BM 3577 / RP62A</strain>
    </source>
</reference>